<gene>
    <name type="ordered locus">SEQ_0368</name>
</gene>
<reference key="1">
    <citation type="journal article" date="2009" name="PLoS Pathog.">
        <title>Genomic evidence for the evolution of Streptococcus equi: host restriction, increased virulence, and genetic exchange with human pathogens.</title>
        <authorList>
            <person name="Holden M.T.G."/>
            <person name="Heather Z."/>
            <person name="Paillot R."/>
            <person name="Steward K.F."/>
            <person name="Webb K."/>
            <person name="Ainslie F."/>
            <person name="Jourdan T."/>
            <person name="Bason N.C."/>
            <person name="Holroyd N.E."/>
            <person name="Mungall K."/>
            <person name="Quail M.A."/>
            <person name="Sanders M."/>
            <person name="Simmonds M."/>
            <person name="Willey D."/>
            <person name="Brooks K."/>
            <person name="Aanensen D.M."/>
            <person name="Spratt B.G."/>
            <person name="Jolley K.A."/>
            <person name="Maiden M.C.J."/>
            <person name="Kehoe M."/>
            <person name="Chanter N."/>
            <person name="Bentley S.D."/>
            <person name="Robinson C."/>
            <person name="Maskell D.J."/>
            <person name="Parkhill J."/>
            <person name="Waller A.S."/>
        </authorList>
    </citation>
    <scope>NUCLEOTIDE SEQUENCE [LARGE SCALE GENOMIC DNA]</scope>
    <source>
        <strain>4047</strain>
    </source>
</reference>
<protein>
    <recommendedName>
        <fullName evidence="1">Nucleoid-associated protein SEQ_0368</fullName>
    </recommendedName>
</protein>
<proteinExistence type="inferred from homology"/>
<evidence type="ECO:0000255" key="1">
    <source>
        <dbReference type="HAMAP-Rule" id="MF_00274"/>
    </source>
</evidence>
<feature type="chain" id="PRO_1000197677" description="Nucleoid-associated protein SEQ_0368">
    <location>
        <begin position="1"/>
        <end position="99"/>
    </location>
</feature>
<dbReference type="EMBL" id="FM204883">
    <property type="protein sequence ID" value="CAW92504.1"/>
    <property type="molecule type" value="Genomic_DNA"/>
</dbReference>
<dbReference type="RefSeq" id="WP_012514952.1">
    <property type="nucleotide sequence ID" value="NC_012471.1"/>
</dbReference>
<dbReference type="SMR" id="C0MA08"/>
<dbReference type="KEGG" id="seu:SEQ_0368"/>
<dbReference type="HOGENOM" id="CLU_140930_1_1_9"/>
<dbReference type="OrthoDB" id="9795263at2"/>
<dbReference type="Proteomes" id="UP000001365">
    <property type="component" value="Chromosome"/>
</dbReference>
<dbReference type="GO" id="GO:0043590">
    <property type="term" value="C:bacterial nucleoid"/>
    <property type="evidence" value="ECO:0007669"/>
    <property type="project" value="UniProtKB-UniRule"/>
</dbReference>
<dbReference type="GO" id="GO:0005829">
    <property type="term" value="C:cytosol"/>
    <property type="evidence" value="ECO:0007669"/>
    <property type="project" value="TreeGrafter"/>
</dbReference>
<dbReference type="GO" id="GO:0003677">
    <property type="term" value="F:DNA binding"/>
    <property type="evidence" value="ECO:0007669"/>
    <property type="project" value="UniProtKB-UniRule"/>
</dbReference>
<dbReference type="Gene3D" id="3.30.1310.10">
    <property type="entry name" value="Nucleoid-associated protein YbaB-like domain"/>
    <property type="match status" value="1"/>
</dbReference>
<dbReference type="HAMAP" id="MF_00274">
    <property type="entry name" value="DNA_YbaB_EbfC"/>
    <property type="match status" value="1"/>
</dbReference>
<dbReference type="InterPro" id="IPR036894">
    <property type="entry name" value="YbaB-like_sf"/>
</dbReference>
<dbReference type="InterPro" id="IPR004401">
    <property type="entry name" value="YbaB/EbfC"/>
</dbReference>
<dbReference type="NCBIfam" id="TIGR00103">
    <property type="entry name" value="DNA_YbaB_EbfC"/>
    <property type="match status" value="1"/>
</dbReference>
<dbReference type="PANTHER" id="PTHR33449">
    <property type="entry name" value="NUCLEOID-ASSOCIATED PROTEIN YBAB"/>
    <property type="match status" value="1"/>
</dbReference>
<dbReference type="PANTHER" id="PTHR33449:SF1">
    <property type="entry name" value="NUCLEOID-ASSOCIATED PROTEIN YBAB"/>
    <property type="match status" value="1"/>
</dbReference>
<dbReference type="Pfam" id="PF02575">
    <property type="entry name" value="YbaB_DNA_bd"/>
    <property type="match status" value="1"/>
</dbReference>
<dbReference type="PIRSF" id="PIRSF004555">
    <property type="entry name" value="UCP004555"/>
    <property type="match status" value="1"/>
</dbReference>
<dbReference type="SUPFAM" id="SSF82607">
    <property type="entry name" value="YbaB-like"/>
    <property type="match status" value="1"/>
</dbReference>
<comment type="function">
    <text evidence="1">Binds to DNA and alters its conformation. May be involved in regulation of gene expression, nucleoid organization and DNA protection.</text>
</comment>
<comment type="subunit">
    <text evidence="1">Homodimer.</text>
</comment>
<comment type="subcellular location">
    <subcellularLocation>
        <location evidence="1">Cytoplasm</location>
        <location evidence="1">Nucleoid</location>
    </subcellularLocation>
</comment>
<comment type="similarity">
    <text evidence="1">Belongs to the YbaB/EbfC family.</text>
</comment>
<name>Y368_STRE4</name>
<accession>C0MA08</accession>
<organism>
    <name type="scientific">Streptococcus equi subsp. equi (strain 4047)</name>
    <dbReference type="NCBI Taxonomy" id="553482"/>
    <lineage>
        <taxon>Bacteria</taxon>
        <taxon>Bacillati</taxon>
        <taxon>Bacillota</taxon>
        <taxon>Bacilli</taxon>
        <taxon>Lactobacillales</taxon>
        <taxon>Streptococcaceae</taxon>
        <taxon>Streptococcus</taxon>
    </lineage>
</organism>
<keyword id="KW-0963">Cytoplasm</keyword>
<keyword id="KW-0238">DNA-binding</keyword>
<sequence length="99" mass="10900">MMNMQNMMKQAQKLQKQMEQKQADLAAMQFTGKSAQELVTATFTGDKQLVSIDFKEAVVDPEDIETLQDMTAQAINAALAQIDEATKKTLGAFAGKLPF</sequence>